<comment type="function">
    <text evidence="2">Function in general translation initiation by promoting the binding of the formylmethionine-tRNA to ribosomes. Seems to function along with eIF-2.</text>
</comment>
<comment type="similarity">
    <text evidence="2">Belongs to the TRAFAC class translation factor GTPase superfamily. Classic translation factor GTPase family. IF-2 subfamily.</text>
</comment>
<gene>
    <name evidence="2" type="primary">infB</name>
    <name type="ordered locus">Hlac_2060</name>
</gene>
<accession>B9LQL7</accession>
<organism>
    <name type="scientific">Halorubrum lacusprofundi (strain ATCC 49239 / DSM 5036 / JCM 8891 / ACAM 34)</name>
    <dbReference type="NCBI Taxonomy" id="416348"/>
    <lineage>
        <taxon>Archaea</taxon>
        <taxon>Methanobacteriati</taxon>
        <taxon>Methanobacteriota</taxon>
        <taxon>Stenosarchaea group</taxon>
        <taxon>Halobacteria</taxon>
        <taxon>Halobacteriales</taxon>
        <taxon>Haloferacaceae</taxon>
        <taxon>Halorubrum</taxon>
    </lineage>
</organism>
<sequence>MTDHTNADTLRTPIVAVLGHVDHGKTSLLDTIRGSAVSEGEAGAITQHIGATDIPLDTISEMAGELIDPTDFDLPGLLFIDTPGHHSFSTLRARGGALADIAVLVVDVNDGFQPQTEEAIDILRRTGTPFVVAANKVDTTPGWNPQDGQPIQRSLEAQSERAESMLNENLYEIIGQLSDAGFSADLYWRVQDFQKNIGVVPLSAITGEGVPDLLTVLMGLSQRFMKEEMAIDVQGPGEGTVLEVKDERGFGATIDTVVYDGVVRNGDQIVVGGQDEPIVTEIRALLQPRPLEEIRTEKKFEKVAEVGAAAGVKIAAPDLDRAMAGAPVRVVRDRPVEEVVEEVKAELAEIEVETAENGVVVKADTLGSLEAMANALREAEVPILRAEVGDIAPRDIAVAETANQDEHKAILGFNVDLLANAETELENADVKLFTDEVIYQLIEDYETYVEEKQRAQQETVLDKVVRPSRFRILPDHTFRQNDPAVVGVEVISGTVQNNRNVGYFEGNEFERVGQLSGIQKQGDDVDEARAGERVSIAIDGPTVGRDIEEGDTLWTEIPEKHAKILEQELKEEITADEREALAAYLETKRKRDPFWGK</sequence>
<dbReference type="EMBL" id="CP001365">
    <property type="protein sequence ID" value="ACM57638.1"/>
    <property type="molecule type" value="Genomic_DNA"/>
</dbReference>
<dbReference type="RefSeq" id="WP_015910763.1">
    <property type="nucleotide sequence ID" value="NC_012029.1"/>
</dbReference>
<dbReference type="SMR" id="B9LQL7"/>
<dbReference type="GeneID" id="7402079"/>
<dbReference type="KEGG" id="hla:Hlac_2060"/>
<dbReference type="eggNOG" id="arCOG01560">
    <property type="taxonomic scope" value="Archaea"/>
</dbReference>
<dbReference type="HOGENOM" id="CLU_002656_3_3_2"/>
<dbReference type="Proteomes" id="UP000000740">
    <property type="component" value="Chromosome 1"/>
</dbReference>
<dbReference type="GO" id="GO:0005737">
    <property type="term" value="C:cytoplasm"/>
    <property type="evidence" value="ECO:0007669"/>
    <property type="project" value="TreeGrafter"/>
</dbReference>
<dbReference type="GO" id="GO:0005525">
    <property type="term" value="F:GTP binding"/>
    <property type="evidence" value="ECO:0007669"/>
    <property type="project" value="UniProtKB-KW"/>
</dbReference>
<dbReference type="GO" id="GO:0003924">
    <property type="term" value="F:GTPase activity"/>
    <property type="evidence" value="ECO:0007669"/>
    <property type="project" value="UniProtKB-UniRule"/>
</dbReference>
<dbReference type="GO" id="GO:0003743">
    <property type="term" value="F:translation initiation factor activity"/>
    <property type="evidence" value="ECO:0007669"/>
    <property type="project" value="UniProtKB-UniRule"/>
</dbReference>
<dbReference type="CDD" id="cd03703">
    <property type="entry name" value="aeIF5B_II"/>
    <property type="match status" value="1"/>
</dbReference>
<dbReference type="CDD" id="cd16266">
    <property type="entry name" value="IF2_aeIF5B_IV"/>
    <property type="match status" value="1"/>
</dbReference>
<dbReference type="CDD" id="cd01887">
    <property type="entry name" value="IF2_eIF5B"/>
    <property type="match status" value="1"/>
</dbReference>
<dbReference type="FunFam" id="3.40.50.300:FF:000112">
    <property type="entry name" value="Eukaryotic translation initiation factor 5B"/>
    <property type="match status" value="1"/>
</dbReference>
<dbReference type="FunFam" id="2.40.30.10:FF:000013">
    <property type="entry name" value="eukaryotic translation initiation factor 5B"/>
    <property type="match status" value="1"/>
</dbReference>
<dbReference type="FunFam" id="3.40.50.10050:FF:000001">
    <property type="entry name" value="Translation initiation factor IF-2"/>
    <property type="match status" value="1"/>
</dbReference>
<dbReference type="Gene3D" id="3.40.50.300">
    <property type="entry name" value="P-loop containing nucleotide triphosphate hydrolases"/>
    <property type="match status" value="1"/>
</dbReference>
<dbReference type="Gene3D" id="2.40.30.10">
    <property type="entry name" value="Translation factors"/>
    <property type="match status" value="2"/>
</dbReference>
<dbReference type="Gene3D" id="3.40.50.10050">
    <property type="entry name" value="Translation initiation factor IF- 2, domain 3"/>
    <property type="match status" value="1"/>
</dbReference>
<dbReference type="HAMAP" id="MF_00100_A">
    <property type="entry name" value="IF_2_A"/>
    <property type="match status" value="1"/>
</dbReference>
<dbReference type="InterPro" id="IPR004161">
    <property type="entry name" value="EFTu-like_2"/>
</dbReference>
<dbReference type="InterPro" id="IPR029459">
    <property type="entry name" value="EFTU-type"/>
</dbReference>
<dbReference type="InterPro" id="IPR027417">
    <property type="entry name" value="P-loop_NTPase"/>
</dbReference>
<dbReference type="InterPro" id="IPR005225">
    <property type="entry name" value="Small_GTP-bd"/>
</dbReference>
<dbReference type="InterPro" id="IPR000795">
    <property type="entry name" value="T_Tr_GTP-bd_dom"/>
</dbReference>
<dbReference type="InterPro" id="IPR004544">
    <property type="entry name" value="TF_aIF-2_arc"/>
</dbReference>
<dbReference type="InterPro" id="IPR015760">
    <property type="entry name" value="TIF_IF2"/>
</dbReference>
<dbReference type="InterPro" id="IPR023115">
    <property type="entry name" value="TIF_IF2_dom3"/>
</dbReference>
<dbReference type="InterPro" id="IPR036925">
    <property type="entry name" value="TIF_IF2_dom3_sf"/>
</dbReference>
<dbReference type="InterPro" id="IPR009000">
    <property type="entry name" value="Transl_B-barrel_sf"/>
</dbReference>
<dbReference type="NCBIfam" id="TIGR00491">
    <property type="entry name" value="aIF-2"/>
    <property type="match status" value="1"/>
</dbReference>
<dbReference type="NCBIfam" id="NF003078">
    <property type="entry name" value="PRK04004.1"/>
    <property type="match status" value="1"/>
</dbReference>
<dbReference type="NCBIfam" id="TIGR00231">
    <property type="entry name" value="small_GTP"/>
    <property type="match status" value="1"/>
</dbReference>
<dbReference type="PANTHER" id="PTHR43381:SF4">
    <property type="entry name" value="EUKARYOTIC TRANSLATION INITIATION FACTOR 5B"/>
    <property type="match status" value="1"/>
</dbReference>
<dbReference type="PANTHER" id="PTHR43381">
    <property type="entry name" value="TRANSLATION INITIATION FACTOR IF-2-RELATED"/>
    <property type="match status" value="1"/>
</dbReference>
<dbReference type="Pfam" id="PF00009">
    <property type="entry name" value="GTP_EFTU"/>
    <property type="match status" value="1"/>
</dbReference>
<dbReference type="Pfam" id="PF03144">
    <property type="entry name" value="GTP_EFTU_D2"/>
    <property type="match status" value="1"/>
</dbReference>
<dbReference type="Pfam" id="PF14578">
    <property type="entry name" value="GTP_EFTU_D4"/>
    <property type="match status" value="1"/>
</dbReference>
<dbReference type="Pfam" id="PF11987">
    <property type="entry name" value="IF-2"/>
    <property type="match status" value="1"/>
</dbReference>
<dbReference type="PRINTS" id="PR00315">
    <property type="entry name" value="ELONGATNFCT"/>
</dbReference>
<dbReference type="SUPFAM" id="SSF52156">
    <property type="entry name" value="Initiation factor IF2/eIF5b, domain 3"/>
    <property type="match status" value="1"/>
</dbReference>
<dbReference type="SUPFAM" id="SSF52540">
    <property type="entry name" value="P-loop containing nucleoside triphosphate hydrolases"/>
    <property type="match status" value="1"/>
</dbReference>
<dbReference type="SUPFAM" id="SSF50447">
    <property type="entry name" value="Translation proteins"/>
    <property type="match status" value="1"/>
</dbReference>
<dbReference type="PROSITE" id="PS51722">
    <property type="entry name" value="G_TR_2"/>
    <property type="match status" value="1"/>
</dbReference>
<name>IF2P_HALLT</name>
<feature type="chain" id="PRO_1000202775" description="Probable translation initiation factor IF-2">
    <location>
        <begin position="1"/>
        <end position="597"/>
    </location>
</feature>
<feature type="domain" description="tr-type G">
    <location>
        <begin position="10"/>
        <end position="226"/>
    </location>
</feature>
<feature type="region of interest" description="G1" evidence="1">
    <location>
        <begin position="19"/>
        <end position="26"/>
    </location>
</feature>
<feature type="region of interest" description="G2" evidence="1">
    <location>
        <begin position="44"/>
        <end position="48"/>
    </location>
</feature>
<feature type="region of interest" description="G3" evidence="1">
    <location>
        <begin position="81"/>
        <end position="84"/>
    </location>
</feature>
<feature type="region of interest" description="G4" evidence="1">
    <location>
        <begin position="135"/>
        <end position="138"/>
    </location>
</feature>
<feature type="region of interest" description="G5" evidence="1">
    <location>
        <begin position="203"/>
        <end position="205"/>
    </location>
</feature>
<feature type="binding site" evidence="2">
    <location>
        <begin position="19"/>
        <end position="26"/>
    </location>
    <ligand>
        <name>GTP</name>
        <dbReference type="ChEBI" id="CHEBI:37565"/>
    </ligand>
</feature>
<feature type="binding site" evidence="2">
    <location>
        <begin position="81"/>
        <end position="85"/>
    </location>
    <ligand>
        <name>GTP</name>
        <dbReference type="ChEBI" id="CHEBI:37565"/>
    </ligand>
</feature>
<feature type="binding site" evidence="2">
    <location>
        <begin position="135"/>
        <end position="138"/>
    </location>
    <ligand>
        <name>GTP</name>
        <dbReference type="ChEBI" id="CHEBI:37565"/>
    </ligand>
</feature>
<protein>
    <recommendedName>
        <fullName evidence="2">Probable translation initiation factor IF-2</fullName>
    </recommendedName>
</protein>
<reference key="1">
    <citation type="journal article" date="2016" name="Stand. Genomic Sci.">
        <title>Complete genome sequence of the Antarctic Halorubrum lacusprofundi type strain ACAM 34.</title>
        <authorList>
            <person name="Anderson I.J."/>
            <person name="DasSarma P."/>
            <person name="Lucas S."/>
            <person name="Copeland A."/>
            <person name="Lapidus A."/>
            <person name="Del Rio T.G."/>
            <person name="Tice H."/>
            <person name="Dalin E."/>
            <person name="Bruce D.C."/>
            <person name="Goodwin L."/>
            <person name="Pitluck S."/>
            <person name="Sims D."/>
            <person name="Brettin T.S."/>
            <person name="Detter J.C."/>
            <person name="Han C.S."/>
            <person name="Larimer F."/>
            <person name="Hauser L."/>
            <person name="Land M."/>
            <person name="Ivanova N."/>
            <person name="Richardson P."/>
            <person name="Cavicchioli R."/>
            <person name="DasSarma S."/>
            <person name="Woese C.R."/>
            <person name="Kyrpides N.C."/>
        </authorList>
    </citation>
    <scope>NUCLEOTIDE SEQUENCE [LARGE SCALE GENOMIC DNA]</scope>
    <source>
        <strain>ATCC 49239 / DSM 5036 / JCM 8891 / ACAM 34</strain>
    </source>
</reference>
<evidence type="ECO:0000250" key="1"/>
<evidence type="ECO:0000255" key="2">
    <source>
        <dbReference type="HAMAP-Rule" id="MF_00100"/>
    </source>
</evidence>
<keyword id="KW-0342">GTP-binding</keyword>
<keyword id="KW-0396">Initiation factor</keyword>
<keyword id="KW-0547">Nucleotide-binding</keyword>
<keyword id="KW-0648">Protein biosynthesis</keyword>
<keyword id="KW-1185">Reference proteome</keyword>
<proteinExistence type="inferred from homology"/>